<proteinExistence type="evidence at protein level"/>
<name>FRLD_BACSU</name>
<organism>
    <name type="scientific">Bacillus subtilis (strain 168)</name>
    <dbReference type="NCBI Taxonomy" id="224308"/>
    <lineage>
        <taxon>Bacteria</taxon>
        <taxon>Bacillati</taxon>
        <taxon>Bacillota</taxon>
        <taxon>Bacilli</taxon>
        <taxon>Bacillales</taxon>
        <taxon>Bacillaceae</taxon>
        <taxon>Bacillus</taxon>
    </lineage>
</organism>
<gene>
    <name type="primary">frlD</name>
    <name type="synonym">yurL</name>
    <name type="ordered locus">BSU32570</name>
</gene>
<dbReference type="EC" id="2.7.1.-"/>
<dbReference type="EMBL" id="AL009126">
    <property type="protein sequence ID" value="CAB15247.1"/>
    <property type="molecule type" value="Genomic_DNA"/>
</dbReference>
<dbReference type="PIR" id="C70018">
    <property type="entry name" value="C70018"/>
</dbReference>
<dbReference type="RefSeq" id="NP_391137.1">
    <property type="nucleotide sequence ID" value="NC_000964.3"/>
</dbReference>
<dbReference type="RefSeq" id="WP_003228626.1">
    <property type="nucleotide sequence ID" value="NZ_OZ025638.1"/>
</dbReference>
<dbReference type="SMR" id="O32153"/>
<dbReference type="FunCoup" id="O32153">
    <property type="interactions" value="36"/>
</dbReference>
<dbReference type="IntAct" id="O32153">
    <property type="interactions" value="1"/>
</dbReference>
<dbReference type="STRING" id="224308.BSU32570"/>
<dbReference type="PaxDb" id="224308-BSU32570"/>
<dbReference type="EnsemblBacteria" id="CAB15247">
    <property type="protein sequence ID" value="CAB15247"/>
    <property type="gene ID" value="BSU_32570"/>
</dbReference>
<dbReference type="GeneID" id="936704"/>
<dbReference type="KEGG" id="bsu:BSU32570"/>
<dbReference type="PATRIC" id="fig|224308.179.peg.3527"/>
<dbReference type="eggNOG" id="COG0524">
    <property type="taxonomic scope" value="Bacteria"/>
</dbReference>
<dbReference type="InParanoid" id="O32153"/>
<dbReference type="OrthoDB" id="9775849at2"/>
<dbReference type="PhylomeDB" id="O32153"/>
<dbReference type="BioCyc" id="BSUB:BSU32570-MONOMER"/>
<dbReference type="BRENDA" id="2.7.1.218">
    <property type="organism ID" value="658"/>
</dbReference>
<dbReference type="SABIO-RK" id="O32153"/>
<dbReference type="Proteomes" id="UP000001570">
    <property type="component" value="Chromosome"/>
</dbReference>
<dbReference type="GO" id="GO:0005524">
    <property type="term" value="F:ATP binding"/>
    <property type="evidence" value="ECO:0007669"/>
    <property type="project" value="UniProtKB-KW"/>
</dbReference>
<dbReference type="GO" id="GO:0016301">
    <property type="term" value="F:kinase activity"/>
    <property type="evidence" value="ECO:0007669"/>
    <property type="project" value="UniProtKB-KW"/>
</dbReference>
<dbReference type="CDD" id="cd01940">
    <property type="entry name" value="Fructoselysine_kinase_like"/>
    <property type="match status" value="1"/>
</dbReference>
<dbReference type="Gene3D" id="3.40.1190.20">
    <property type="match status" value="1"/>
</dbReference>
<dbReference type="InterPro" id="IPR002173">
    <property type="entry name" value="Carboh/pur_kinase_PfkB_CS"/>
</dbReference>
<dbReference type="InterPro" id="IPR050306">
    <property type="entry name" value="PfkB_Carbo_kinase"/>
</dbReference>
<dbReference type="InterPro" id="IPR011611">
    <property type="entry name" value="PfkB_dom"/>
</dbReference>
<dbReference type="InterPro" id="IPR029056">
    <property type="entry name" value="Ribokinase-like"/>
</dbReference>
<dbReference type="PANTHER" id="PTHR43085:SF41">
    <property type="entry name" value="FRUCTOSELYSINE 6-KINASE"/>
    <property type="match status" value="1"/>
</dbReference>
<dbReference type="PANTHER" id="PTHR43085">
    <property type="entry name" value="HEXOKINASE FAMILY MEMBER"/>
    <property type="match status" value="1"/>
</dbReference>
<dbReference type="Pfam" id="PF00294">
    <property type="entry name" value="PfkB"/>
    <property type="match status" value="1"/>
</dbReference>
<dbReference type="SUPFAM" id="SSF53613">
    <property type="entry name" value="Ribokinase-like"/>
    <property type="match status" value="1"/>
</dbReference>
<dbReference type="PROSITE" id="PS00584">
    <property type="entry name" value="PFKB_KINASES_2"/>
    <property type="match status" value="1"/>
</dbReference>
<evidence type="ECO:0000269" key="1">
    <source>
    </source>
</evidence>
<evidence type="ECO:0000305" key="2"/>
<reference key="1">
    <citation type="journal article" date="1997" name="Nature">
        <title>The complete genome sequence of the Gram-positive bacterium Bacillus subtilis.</title>
        <authorList>
            <person name="Kunst F."/>
            <person name="Ogasawara N."/>
            <person name="Moszer I."/>
            <person name="Albertini A.M."/>
            <person name="Alloni G."/>
            <person name="Azevedo V."/>
            <person name="Bertero M.G."/>
            <person name="Bessieres P."/>
            <person name="Bolotin A."/>
            <person name="Borchert S."/>
            <person name="Borriss R."/>
            <person name="Boursier L."/>
            <person name="Brans A."/>
            <person name="Braun M."/>
            <person name="Brignell S.C."/>
            <person name="Bron S."/>
            <person name="Brouillet S."/>
            <person name="Bruschi C.V."/>
            <person name="Caldwell B."/>
            <person name="Capuano V."/>
            <person name="Carter N.M."/>
            <person name="Choi S.-K."/>
            <person name="Codani J.-J."/>
            <person name="Connerton I.F."/>
            <person name="Cummings N.J."/>
            <person name="Daniel R.A."/>
            <person name="Denizot F."/>
            <person name="Devine K.M."/>
            <person name="Duesterhoeft A."/>
            <person name="Ehrlich S.D."/>
            <person name="Emmerson P.T."/>
            <person name="Entian K.-D."/>
            <person name="Errington J."/>
            <person name="Fabret C."/>
            <person name="Ferrari E."/>
            <person name="Foulger D."/>
            <person name="Fritz C."/>
            <person name="Fujita M."/>
            <person name="Fujita Y."/>
            <person name="Fuma S."/>
            <person name="Galizzi A."/>
            <person name="Galleron N."/>
            <person name="Ghim S.-Y."/>
            <person name="Glaser P."/>
            <person name="Goffeau A."/>
            <person name="Golightly E.J."/>
            <person name="Grandi G."/>
            <person name="Guiseppi G."/>
            <person name="Guy B.J."/>
            <person name="Haga K."/>
            <person name="Haiech J."/>
            <person name="Harwood C.R."/>
            <person name="Henaut A."/>
            <person name="Hilbert H."/>
            <person name="Holsappel S."/>
            <person name="Hosono S."/>
            <person name="Hullo M.-F."/>
            <person name="Itaya M."/>
            <person name="Jones L.-M."/>
            <person name="Joris B."/>
            <person name="Karamata D."/>
            <person name="Kasahara Y."/>
            <person name="Klaerr-Blanchard M."/>
            <person name="Klein C."/>
            <person name="Kobayashi Y."/>
            <person name="Koetter P."/>
            <person name="Koningstein G."/>
            <person name="Krogh S."/>
            <person name="Kumano M."/>
            <person name="Kurita K."/>
            <person name="Lapidus A."/>
            <person name="Lardinois S."/>
            <person name="Lauber J."/>
            <person name="Lazarevic V."/>
            <person name="Lee S.-M."/>
            <person name="Levine A."/>
            <person name="Liu H."/>
            <person name="Masuda S."/>
            <person name="Mauel C."/>
            <person name="Medigue C."/>
            <person name="Medina N."/>
            <person name="Mellado R.P."/>
            <person name="Mizuno M."/>
            <person name="Moestl D."/>
            <person name="Nakai S."/>
            <person name="Noback M."/>
            <person name="Noone D."/>
            <person name="O'Reilly M."/>
            <person name="Ogawa K."/>
            <person name="Ogiwara A."/>
            <person name="Oudega B."/>
            <person name="Park S.-H."/>
            <person name="Parro V."/>
            <person name="Pohl T.M."/>
            <person name="Portetelle D."/>
            <person name="Porwollik S."/>
            <person name="Prescott A.M."/>
            <person name="Presecan E."/>
            <person name="Pujic P."/>
            <person name="Purnelle B."/>
            <person name="Rapoport G."/>
            <person name="Rey M."/>
            <person name="Reynolds S."/>
            <person name="Rieger M."/>
            <person name="Rivolta C."/>
            <person name="Rocha E."/>
            <person name="Roche B."/>
            <person name="Rose M."/>
            <person name="Sadaie Y."/>
            <person name="Sato T."/>
            <person name="Scanlan E."/>
            <person name="Schleich S."/>
            <person name="Schroeter R."/>
            <person name="Scoffone F."/>
            <person name="Sekiguchi J."/>
            <person name="Sekowska A."/>
            <person name="Seror S.J."/>
            <person name="Serror P."/>
            <person name="Shin B.-S."/>
            <person name="Soldo B."/>
            <person name="Sorokin A."/>
            <person name="Tacconi E."/>
            <person name="Takagi T."/>
            <person name="Takahashi H."/>
            <person name="Takemaru K."/>
            <person name="Takeuchi M."/>
            <person name="Tamakoshi A."/>
            <person name="Tanaka T."/>
            <person name="Terpstra P."/>
            <person name="Tognoni A."/>
            <person name="Tosato V."/>
            <person name="Uchiyama S."/>
            <person name="Vandenbol M."/>
            <person name="Vannier F."/>
            <person name="Vassarotti A."/>
            <person name="Viari A."/>
            <person name="Wambutt R."/>
            <person name="Wedler E."/>
            <person name="Wedler H."/>
            <person name="Weitzenegger T."/>
            <person name="Winters P."/>
            <person name="Wipat A."/>
            <person name="Yamamoto H."/>
            <person name="Yamane K."/>
            <person name="Yasumoto K."/>
            <person name="Yata K."/>
            <person name="Yoshida K."/>
            <person name="Yoshikawa H.-F."/>
            <person name="Zumstein E."/>
            <person name="Yoshikawa H."/>
            <person name="Danchin A."/>
        </authorList>
    </citation>
    <scope>NUCLEOTIDE SEQUENCE [LARGE SCALE GENOMIC DNA]</scope>
    <source>
        <strain>168</strain>
    </source>
</reference>
<reference key="2">
    <citation type="journal article" date="2004" name="FEBS Lett.">
        <title>Identification of enzymes acting on alpha-glycated amino acids in Bacillus subtilis.</title>
        <authorList>
            <person name="Wiame E."/>
            <person name="Duquenne A."/>
            <person name="Delpierre G."/>
            <person name="Van Schaftingen E."/>
        </authorList>
    </citation>
    <scope>FUNCTION</scope>
    <scope>SUBSTRATE SPECIFICITY</scope>
    <scope>BIOPHYSICOCHEMICAL PROPERTIES</scope>
</reference>
<sequence length="284" mass="30986">MKLIAVGDNVVDYYQDQETFYPGGNALNVAVLAKRLGHESSYIGIVGNDEAAAHLLNVLKLEQVNADYIRQAHGENGMAIVTLDEQGDRIFVRSNKGGIQSRLRLAFQEKDVSFISGHDLLHTSVYSRLENDLPQLCGLVPVSFDFSTNREDDYLRRVCPYVTYAFFSGSDLSESECGELAKTAHGYGAKMVCMTRGGQGAILSAGDRVYHQPIVEADIIDTLGAGDSFIAGFLTAFCVKQDITYALRQAAETAAKTCGVYGAFGYGYPYRLEDGGSSEKTRIL</sequence>
<keyword id="KW-0067">ATP-binding</keyword>
<keyword id="KW-0119">Carbohydrate metabolism</keyword>
<keyword id="KW-0418">Kinase</keyword>
<keyword id="KW-0547">Nucleotide-binding</keyword>
<keyword id="KW-1185">Reference proteome</keyword>
<keyword id="KW-0808">Transferase</keyword>
<feature type="chain" id="PRO_0000080142" description="Fructosamine kinase FrlD">
    <location>
        <begin position="1"/>
        <end position="284"/>
    </location>
</feature>
<protein>
    <recommendedName>
        <fullName>Fructosamine kinase FrlD</fullName>
        <ecNumber>2.7.1.-</ecNumber>
    </recommendedName>
</protein>
<accession>O32153</accession>
<comment type="function">
    <text evidence="1">Catalyzes the phosphorylation of a range of fructosamines to fructosamine 6-phosphates.</text>
</comment>
<comment type="biophysicochemical properties">
    <kinetics>
        <KM evidence="1">0.1 mM for fructosevaline (at 30 degrees Celsius and pH 7.1)</KM>
        <KM evidence="1">0.6 mM for fructoseglycine (at 30 degrees Celsius and pH 7.1)</KM>
        <KM evidence="1">6 mM for fructoseglycylglycine (at 30 degrees Celsius and pH 7.1)</KM>
        <KM evidence="1">14 mM for fructoselysine (at 30 degrees Celsius and pH 7.1)</KM>
        <KM evidence="1">47 mM for 1-deoxy-1-morpholinofructose (DMF)(at 30 degrees Celsius and pH 7.1)</KM>
        <Vmax evidence="1">3.0 umol/min/mg enzyme with fructosevaline as substrate (at 30 degrees Celsius and pH 7.1)</Vmax>
        <Vmax evidence="1">5.0 umol/min/mg enzyme with 1-deoxy-1-morpholinofructose (DMF) as substrate (at 30 degrees Celsius and pH 7.1)</Vmax>
        <Vmax evidence="1">7.0 umol/min/mg enzyme with fructoselysine as substrate (at 30 degrees Celsius and pH 7.1)</Vmax>
        <Vmax evidence="1">10.0 umol/min/mg enzyme with fructoseglycine as substrate (at 30 degrees Celsius and pH 7.1)</Vmax>
        <Vmax evidence="1">10.0 umol/min/mg enzyme with fructoseglycylglycine as substrate (at 30 degrees Celsius and pH 7.1)</Vmax>
    </kinetics>
</comment>
<comment type="similarity">
    <text evidence="2">Belongs to the carbohydrate kinase PfkB family.</text>
</comment>